<feature type="chain" id="PRO_0000208682" description="Cytochrome c6">
    <location>
        <begin position="1"/>
        <end position="87"/>
    </location>
</feature>
<feature type="binding site" description="covalent" evidence="1">
    <location>
        <position position="14"/>
    </location>
    <ligand>
        <name>heme c</name>
        <dbReference type="ChEBI" id="CHEBI:61717"/>
    </ligand>
</feature>
<feature type="binding site" description="covalent" evidence="1">
    <location>
        <position position="17"/>
    </location>
    <ligand>
        <name>heme c</name>
        <dbReference type="ChEBI" id="CHEBI:61717"/>
    </ligand>
</feature>
<feature type="binding site" description="axial binding residue" evidence="1">
    <location>
        <position position="18"/>
    </location>
    <ligand>
        <name>heme c</name>
        <dbReference type="ChEBI" id="CHEBI:61717"/>
    </ligand>
    <ligandPart>
        <name>Fe</name>
        <dbReference type="ChEBI" id="CHEBI:18248"/>
    </ligandPart>
</feature>
<feature type="binding site" description="axial binding residue" evidence="1">
    <location>
        <position position="58"/>
    </location>
    <ligand>
        <name>heme c</name>
        <dbReference type="ChEBI" id="CHEBI:61717"/>
    </ligand>
    <ligandPart>
        <name>Fe</name>
        <dbReference type="ChEBI" id="CHEBI:18248"/>
    </ligandPart>
</feature>
<evidence type="ECO:0000250" key="1"/>
<evidence type="ECO:0000305" key="2"/>
<organism>
    <name type="scientific">Aphanizomenon flos-aquae</name>
    <dbReference type="NCBI Taxonomy" id="1176"/>
    <lineage>
        <taxon>Bacteria</taxon>
        <taxon>Bacillati</taxon>
        <taxon>Cyanobacteriota</taxon>
        <taxon>Cyanophyceae</taxon>
        <taxon>Nostocales</taxon>
        <taxon>Aphanizomenonaceae</taxon>
        <taxon>Aphanizomenon</taxon>
    </lineage>
</organism>
<sequence>ADTVSGAALFKANCAQCHVGGGNLVNRAKTLKKEALEKYNMYSAKAIIAQVTHGKGAMPAFGIRLKAEQIENVAAYVLEQADNGWKK</sequence>
<comment type="function">
    <text>Functions as an electron carrier between membrane-bound cytochrome b6-f and photosystem I in oxygenic photosynthesis.</text>
</comment>
<comment type="subunit">
    <text evidence="1">Monomer.</text>
</comment>
<comment type="subcellular location">
    <subcellularLocation>
        <location evidence="2">Cellular thylakoid lumen</location>
    </subcellularLocation>
</comment>
<comment type="PTM">
    <text evidence="1">Binds 1 heme c group covalently per subunit.</text>
</comment>
<comment type="similarity">
    <text evidence="2">Belongs to the cytochrome c family. PetJ subfamily.</text>
</comment>
<keyword id="KW-0903">Direct protein sequencing</keyword>
<keyword id="KW-0249">Electron transport</keyword>
<keyword id="KW-0349">Heme</keyword>
<keyword id="KW-0408">Iron</keyword>
<keyword id="KW-0479">Metal-binding</keyword>
<keyword id="KW-0602">Photosynthesis</keyword>
<keyword id="KW-0793">Thylakoid</keyword>
<keyword id="KW-0813">Transport</keyword>
<gene>
    <name type="primary">petJ</name>
</gene>
<reference key="1">
    <citation type="journal article" date="1982" name="J. Biol. Chem.">
        <title>Structure and heme environment of ferrocytochrome c553 from 1H NMR studies.</title>
        <authorList>
            <person name="Ulrich E.L."/>
            <person name="Krogmann D.W."/>
            <person name="Markley J.L."/>
        </authorList>
    </citation>
    <scope>PROTEIN SEQUENCE</scope>
</reference>
<name>CYC6_APHFL</name>
<accession>P00116</accession>
<protein>
    <recommendedName>
        <fullName>Cytochrome c6</fullName>
    </recommendedName>
    <alternativeName>
        <fullName>Cytochrome c-553</fullName>
    </alternativeName>
    <alternativeName>
        <fullName>Cytochrome c553</fullName>
    </alternativeName>
    <alternativeName>
        <fullName>Soluble cytochrome f</fullName>
    </alternativeName>
</protein>
<proteinExistence type="evidence at protein level"/>
<dbReference type="PIR" id="A00108">
    <property type="entry name" value="CCFZ6"/>
</dbReference>
<dbReference type="SMR" id="P00116"/>
<dbReference type="GO" id="GO:0031979">
    <property type="term" value="C:plasma membrane-derived thylakoid lumen"/>
    <property type="evidence" value="ECO:0007669"/>
    <property type="project" value="UniProtKB-SubCell"/>
</dbReference>
<dbReference type="GO" id="GO:0009055">
    <property type="term" value="F:electron transfer activity"/>
    <property type="evidence" value="ECO:0007669"/>
    <property type="project" value="UniProtKB-UniRule"/>
</dbReference>
<dbReference type="GO" id="GO:0020037">
    <property type="term" value="F:heme binding"/>
    <property type="evidence" value="ECO:0007669"/>
    <property type="project" value="InterPro"/>
</dbReference>
<dbReference type="GO" id="GO:0005506">
    <property type="term" value="F:iron ion binding"/>
    <property type="evidence" value="ECO:0007669"/>
    <property type="project" value="InterPro"/>
</dbReference>
<dbReference type="GO" id="GO:0015979">
    <property type="term" value="P:photosynthesis"/>
    <property type="evidence" value="ECO:0007669"/>
    <property type="project" value="UniProtKB-UniRule"/>
</dbReference>
<dbReference type="FunFam" id="1.10.760.10:FF:000038">
    <property type="entry name" value="Cytochrome c6"/>
    <property type="match status" value="1"/>
</dbReference>
<dbReference type="Gene3D" id="1.10.760.10">
    <property type="entry name" value="Cytochrome c-like domain"/>
    <property type="match status" value="1"/>
</dbReference>
<dbReference type="HAMAP" id="MF_00594">
    <property type="entry name" value="Cytc_PetJ"/>
    <property type="match status" value="1"/>
</dbReference>
<dbReference type="InterPro" id="IPR009056">
    <property type="entry name" value="Cyt_c-like_dom"/>
</dbReference>
<dbReference type="InterPro" id="IPR036909">
    <property type="entry name" value="Cyt_c-like_dom_sf"/>
</dbReference>
<dbReference type="InterPro" id="IPR023655">
    <property type="entry name" value="Cyt_C6"/>
</dbReference>
<dbReference type="InterPro" id="IPR008168">
    <property type="entry name" value="Cyt_C_IC"/>
</dbReference>
<dbReference type="NCBIfam" id="NF045930">
    <property type="entry name" value="Cytc6PetJCyano"/>
    <property type="match status" value="1"/>
</dbReference>
<dbReference type="PANTHER" id="PTHR34688">
    <property type="entry name" value="CYTOCHROME C6, CHLOROPLASTIC"/>
    <property type="match status" value="1"/>
</dbReference>
<dbReference type="PANTHER" id="PTHR34688:SF2">
    <property type="entry name" value="CYTOCHROME C6, CHLOROPLASTIC"/>
    <property type="match status" value="1"/>
</dbReference>
<dbReference type="Pfam" id="PF13442">
    <property type="entry name" value="Cytochrome_CBB3"/>
    <property type="match status" value="1"/>
</dbReference>
<dbReference type="PRINTS" id="PR00605">
    <property type="entry name" value="CYTCHROMECIC"/>
</dbReference>
<dbReference type="SUPFAM" id="SSF46626">
    <property type="entry name" value="Cytochrome c"/>
    <property type="match status" value="1"/>
</dbReference>
<dbReference type="PROSITE" id="PS51007">
    <property type="entry name" value="CYTC"/>
    <property type="match status" value="1"/>
</dbReference>